<sequence length="213" mass="22317">MNNSHADVGLVIAVKRLTAAKTRLAPMFSARTREDVVLAMLVDTITAAIAVPALRSVLVVTPDEDAADAARQLGALVLPDPTPQGHHDPLNNALTAAEVVARRENTNVVALQGDLPALRTVELAEAIGAARAHARSFVTDRHGTGTSALFSFGAPLDPHFGLDSAQRHRRSGAVELTGDWPGLRSDIDTPDDVLALNDLGVGPATARAIARAQ</sequence>
<accession>A1T705</accession>
<keyword id="KW-0342">GTP-binding</keyword>
<keyword id="KW-0547">Nucleotide-binding</keyword>
<keyword id="KW-0548">Nucleotidyltransferase</keyword>
<keyword id="KW-0808">Transferase</keyword>
<name>FBID_MYCVP</name>
<organism>
    <name type="scientific">Mycolicibacterium vanbaalenii (strain DSM 7251 / JCM 13017 / BCRC 16820 / KCTC 9966 / NRRL B-24157 / PYR-1)</name>
    <name type="common">Mycobacterium vanbaalenii</name>
    <dbReference type="NCBI Taxonomy" id="350058"/>
    <lineage>
        <taxon>Bacteria</taxon>
        <taxon>Bacillati</taxon>
        <taxon>Actinomycetota</taxon>
        <taxon>Actinomycetes</taxon>
        <taxon>Mycobacteriales</taxon>
        <taxon>Mycobacteriaceae</taxon>
        <taxon>Mycolicibacterium</taxon>
    </lineage>
</organism>
<feature type="chain" id="PRO_0000398701" description="Phosphoenolpyruvate guanylyltransferase">
    <location>
        <begin position="1"/>
        <end position="213"/>
    </location>
</feature>
<feature type="binding site" evidence="1">
    <location>
        <position position="146"/>
    </location>
    <ligand>
        <name>phosphoenolpyruvate</name>
        <dbReference type="ChEBI" id="CHEBI:58702"/>
    </ligand>
</feature>
<feature type="binding site" evidence="1">
    <location>
        <position position="161"/>
    </location>
    <ligand>
        <name>phosphoenolpyruvate</name>
        <dbReference type="ChEBI" id="CHEBI:58702"/>
    </ligand>
</feature>
<feature type="binding site" evidence="1">
    <location>
        <position position="164"/>
    </location>
    <ligand>
        <name>phosphoenolpyruvate</name>
        <dbReference type="ChEBI" id="CHEBI:58702"/>
    </ligand>
</feature>
<comment type="function">
    <text evidence="1">Guanylyltransferase that catalyzes the activation of phosphoenolpyruvate (PEP) as enolpyruvoyl-2-diphospho-5'-guanosine, via the condensation of PEP with GTP. It is involved in the biosynthesis of coenzyme F420, a hydride carrier cofactor.</text>
</comment>
<comment type="catalytic activity">
    <reaction evidence="1">
        <text>phosphoenolpyruvate + GTP + H(+) = enolpyruvoyl-2-diphospho-5'-guanosine + diphosphate</text>
        <dbReference type="Rhea" id="RHEA:30519"/>
        <dbReference type="ChEBI" id="CHEBI:15378"/>
        <dbReference type="ChEBI" id="CHEBI:33019"/>
        <dbReference type="ChEBI" id="CHEBI:37565"/>
        <dbReference type="ChEBI" id="CHEBI:58702"/>
        <dbReference type="ChEBI" id="CHEBI:143701"/>
        <dbReference type="EC" id="2.7.7.105"/>
    </reaction>
</comment>
<comment type="pathway">
    <text evidence="1">Cofactor biosynthesis; coenzyme F420 biosynthesis.</text>
</comment>
<comment type="similarity">
    <text evidence="1">Belongs to the CofC family.</text>
</comment>
<proteinExistence type="inferred from homology"/>
<protein>
    <recommendedName>
        <fullName evidence="1">Phosphoenolpyruvate guanylyltransferase</fullName>
        <shortName evidence="1">PEP guanylyltransferase</shortName>
        <ecNumber evidence="1">2.7.7.105</ecNumber>
    </recommendedName>
</protein>
<gene>
    <name evidence="1" type="primary">fbiD</name>
    <name type="ordered locus">Mvan_2140</name>
</gene>
<reference key="1">
    <citation type="submission" date="2006-12" db="EMBL/GenBank/DDBJ databases">
        <title>Complete sequence of Mycobacterium vanbaalenii PYR-1.</title>
        <authorList>
            <consortium name="US DOE Joint Genome Institute"/>
            <person name="Copeland A."/>
            <person name="Lucas S."/>
            <person name="Lapidus A."/>
            <person name="Barry K."/>
            <person name="Detter J.C."/>
            <person name="Glavina del Rio T."/>
            <person name="Hammon N."/>
            <person name="Israni S."/>
            <person name="Dalin E."/>
            <person name="Tice H."/>
            <person name="Pitluck S."/>
            <person name="Singan V."/>
            <person name="Schmutz J."/>
            <person name="Larimer F."/>
            <person name="Land M."/>
            <person name="Hauser L."/>
            <person name="Kyrpides N."/>
            <person name="Anderson I.J."/>
            <person name="Miller C."/>
            <person name="Richardson P."/>
        </authorList>
    </citation>
    <scope>NUCLEOTIDE SEQUENCE [LARGE SCALE GENOMIC DNA]</scope>
    <source>
        <strain>DSM 7251 / JCM 13017 / BCRC 16820 / KCTC 9966 / NRRL B-24157 / PYR-1</strain>
    </source>
</reference>
<evidence type="ECO:0000255" key="1">
    <source>
        <dbReference type="HAMAP-Rule" id="MF_02114"/>
    </source>
</evidence>
<dbReference type="EC" id="2.7.7.105" evidence="1"/>
<dbReference type="EMBL" id="CP000511">
    <property type="protein sequence ID" value="ABM12955.1"/>
    <property type="molecule type" value="Genomic_DNA"/>
</dbReference>
<dbReference type="SMR" id="A1T705"/>
<dbReference type="STRING" id="350058.Mvan_2140"/>
<dbReference type="KEGG" id="mva:Mvan_2140"/>
<dbReference type="eggNOG" id="COG1920">
    <property type="taxonomic scope" value="Bacteria"/>
</dbReference>
<dbReference type="HOGENOM" id="CLU_076569_0_0_11"/>
<dbReference type="UniPathway" id="UPA00071"/>
<dbReference type="Proteomes" id="UP000009159">
    <property type="component" value="Chromosome"/>
</dbReference>
<dbReference type="GO" id="GO:0005525">
    <property type="term" value="F:GTP binding"/>
    <property type="evidence" value="ECO:0007669"/>
    <property type="project" value="UniProtKB-KW"/>
</dbReference>
<dbReference type="GO" id="GO:0043814">
    <property type="term" value="F:phospholactate guanylyltransferase activity"/>
    <property type="evidence" value="ECO:0007669"/>
    <property type="project" value="InterPro"/>
</dbReference>
<dbReference type="GO" id="GO:0052645">
    <property type="term" value="P:F420-0 metabolic process"/>
    <property type="evidence" value="ECO:0007669"/>
    <property type="project" value="UniProtKB-UniRule"/>
</dbReference>
<dbReference type="Gene3D" id="3.90.550.10">
    <property type="entry name" value="Spore Coat Polysaccharide Biosynthesis Protein SpsA, Chain A"/>
    <property type="match status" value="1"/>
</dbReference>
<dbReference type="HAMAP" id="MF_02114">
    <property type="entry name" value="CofC"/>
    <property type="match status" value="1"/>
</dbReference>
<dbReference type="InterPro" id="IPR002835">
    <property type="entry name" value="CofC"/>
</dbReference>
<dbReference type="InterPro" id="IPR029044">
    <property type="entry name" value="Nucleotide-diphossugar_trans"/>
</dbReference>
<dbReference type="NCBIfam" id="TIGR03552">
    <property type="entry name" value="F420_cofC"/>
    <property type="match status" value="1"/>
</dbReference>
<dbReference type="PANTHER" id="PTHR40392">
    <property type="entry name" value="2-PHOSPHO-L-LACTATE GUANYLYLTRANSFERASE"/>
    <property type="match status" value="1"/>
</dbReference>
<dbReference type="PANTHER" id="PTHR40392:SF1">
    <property type="entry name" value="2-PHOSPHO-L-LACTATE GUANYLYLTRANSFERASE"/>
    <property type="match status" value="1"/>
</dbReference>
<dbReference type="Pfam" id="PF01983">
    <property type="entry name" value="CofC"/>
    <property type="match status" value="1"/>
</dbReference>
<dbReference type="SUPFAM" id="SSF53448">
    <property type="entry name" value="Nucleotide-diphospho-sugar transferases"/>
    <property type="match status" value="1"/>
</dbReference>